<keyword id="KW-0648">Protein biosynthesis</keyword>
<keyword id="KW-0808">Transferase</keyword>
<proteinExistence type="inferred from homology"/>
<name>FMT_THESQ</name>
<comment type="function">
    <text evidence="1">Attaches a formyl group to the free amino group of methionyl-tRNA(fMet). The formyl group appears to play a dual role in the initiator identity of N-formylmethionyl-tRNA by promoting its recognition by IF2 and preventing the misappropriation of this tRNA by the elongation apparatus.</text>
</comment>
<comment type="catalytic activity">
    <reaction evidence="1">
        <text>L-methionyl-tRNA(fMet) + (6R)-10-formyltetrahydrofolate = N-formyl-L-methionyl-tRNA(fMet) + (6S)-5,6,7,8-tetrahydrofolate + H(+)</text>
        <dbReference type="Rhea" id="RHEA:24380"/>
        <dbReference type="Rhea" id="RHEA-COMP:9952"/>
        <dbReference type="Rhea" id="RHEA-COMP:9953"/>
        <dbReference type="ChEBI" id="CHEBI:15378"/>
        <dbReference type="ChEBI" id="CHEBI:57453"/>
        <dbReference type="ChEBI" id="CHEBI:78530"/>
        <dbReference type="ChEBI" id="CHEBI:78844"/>
        <dbReference type="ChEBI" id="CHEBI:195366"/>
        <dbReference type="EC" id="2.1.2.9"/>
    </reaction>
</comment>
<comment type="similarity">
    <text evidence="1">Belongs to the Fmt family.</text>
</comment>
<evidence type="ECO:0000255" key="1">
    <source>
        <dbReference type="HAMAP-Rule" id="MF_00182"/>
    </source>
</evidence>
<sequence length="313" mass="35216">MRIVFVGTPEFAAEILEHLIKNGFNVVGVVTQPDKPRGRGRKVEPTPVKVVAEKHRVPFIQPESINKKEALEFLRSVGPDVIIVASYGKILGEKVLSLPSLGCYNIHPSLLPKYRGASPIQRVLENGEERTGVTIYKMVRELDAGPIALQREISIDPFETFDQLEKRLIELSKEMSIEFLEKLKVGDIELKEQDHSRATYAPMIKKEDLIVDFSKDAESVKNKIRAYDSRPGARAFLGNDEVKLFGVTAIDSSGDEPGLIHYIDREGAWIGTGKGMVKVKYLQLPGKKKLTFWELRNGRLIEEGMKLEGRYES</sequence>
<organism>
    <name type="scientific">Thermotoga sp. (strain RQ2)</name>
    <dbReference type="NCBI Taxonomy" id="126740"/>
    <lineage>
        <taxon>Bacteria</taxon>
        <taxon>Thermotogati</taxon>
        <taxon>Thermotogota</taxon>
        <taxon>Thermotogae</taxon>
        <taxon>Thermotogales</taxon>
        <taxon>Thermotogaceae</taxon>
        <taxon>Thermotoga</taxon>
    </lineage>
</organism>
<accession>B1L8W7</accession>
<protein>
    <recommendedName>
        <fullName evidence="1">Methionyl-tRNA formyltransferase</fullName>
        <ecNumber evidence="1">2.1.2.9</ecNumber>
    </recommendedName>
</protein>
<gene>
    <name evidence="1" type="primary">fmt</name>
    <name type="ordered locus">TRQ2_0409</name>
</gene>
<dbReference type="EC" id="2.1.2.9" evidence="1"/>
<dbReference type="EMBL" id="CP000969">
    <property type="protein sequence ID" value="ACB08765.1"/>
    <property type="molecule type" value="Genomic_DNA"/>
</dbReference>
<dbReference type="RefSeq" id="WP_012310526.1">
    <property type="nucleotide sequence ID" value="NC_010483.1"/>
</dbReference>
<dbReference type="SMR" id="B1L8W7"/>
<dbReference type="KEGG" id="trq:TRQ2_0409"/>
<dbReference type="HOGENOM" id="CLU_033347_1_1_0"/>
<dbReference type="Proteomes" id="UP000001687">
    <property type="component" value="Chromosome"/>
</dbReference>
<dbReference type="GO" id="GO:0005829">
    <property type="term" value="C:cytosol"/>
    <property type="evidence" value="ECO:0007669"/>
    <property type="project" value="TreeGrafter"/>
</dbReference>
<dbReference type="GO" id="GO:0004479">
    <property type="term" value="F:methionyl-tRNA formyltransferase activity"/>
    <property type="evidence" value="ECO:0007669"/>
    <property type="project" value="UniProtKB-UniRule"/>
</dbReference>
<dbReference type="CDD" id="cd08646">
    <property type="entry name" value="FMT_core_Met-tRNA-FMT_N"/>
    <property type="match status" value="1"/>
</dbReference>
<dbReference type="CDD" id="cd08704">
    <property type="entry name" value="Met_tRNA_FMT_C"/>
    <property type="match status" value="1"/>
</dbReference>
<dbReference type="FunFam" id="3.40.50.12230:FF:000001">
    <property type="entry name" value="Methionyl-tRNA formyltransferase"/>
    <property type="match status" value="1"/>
</dbReference>
<dbReference type="Gene3D" id="3.40.50.12230">
    <property type="match status" value="1"/>
</dbReference>
<dbReference type="HAMAP" id="MF_00182">
    <property type="entry name" value="Formyl_trans"/>
    <property type="match status" value="1"/>
</dbReference>
<dbReference type="InterPro" id="IPR005794">
    <property type="entry name" value="Fmt"/>
</dbReference>
<dbReference type="InterPro" id="IPR005793">
    <property type="entry name" value="Formyl_trans_C"/>
</dbReference>
<dbReference type="InterPro" id="IPR002376">
    <property type="entry name" value="Formyl_transf_N"/>
</dbReference>
<dbReference type="InterPro" id="IPR036477">
    <property type="entry name" value="Formyl_transf_N_sf"/>
</dbReference>
<dbReference type="InterPro" id="IPR011034">
    <property type="entry name" value="Formyl_transferase-like_C_sf"/>
</dbReference>
<dbReference type="InterPro" id="IPR044135">
    <property type="entry name" value="Met-tRNA-FMT_C"/>
</dbReference>
<dbReference type="InterPro" id="IPR041711">
    <property type="entry name" value="Met-tRNA-FMT_N"/>
</dbReference>
<dbReference type="NCBIfam" id="TIGR00460">
    <property type="entry name" value="fmt"/>
    <property type="match status" value="1"/>
</dbReference>
<dbReference type="PANTHER" id="PTHR11138">
    <property type="entry name" value="METHIONYL-TRNA FORMYLTRANSFERASE"/>
    <property type="match status" value="1"/>
</dbReference>
<dbReference type="PANTHER" id="PTHR11138:SF5">
    <property type="entry name" value="METHIONYL-TRNA FORMYLTRANSFERASE, MITOCHONDRIAL"/>
    <property type="match status" value="1"/>
</dbReference>
<dbReference type="Pfam" id="PF02911">
    <property type="entry name" value="Formyl_trans_C"/>
    <property type="match status" value="1"/>
</dbReference>
<dbReference type="Pfam" id="PF00551">
    <property type="entry name" value="Formyl_trans_N"/>
    <property type="match status" value="1"/>
</dbReference>
<dbReference type="SUPFAM" id="SSF50486">
    <property type="entry name" value="FMT C-terminal domain-like"/>
    <property type="match status" value="1"/>
</dbReference>
<dbReference type="SUPFAM" id="SSF53328">
    <property type="entry name" value="Formyltransferase"/>
    <property type="match status" value="1"/>
</dbReference>
<reference key="1">
    <citation type="journal article" date="2011" name="J. Bacteriol.">
        <title>Genome sequence of Thermotoga sp. strain RQ2, a hyperthermophilic bacterium isolated from a geothermally heated region of the seafloor near Ribeira Quente, the Azores.</title>
        <authorList>
            <person name="Swithers K.S."/>
            <person name="DiPippo J.L."/>
            <person name="Bruce D.C."/>
            <person name="Detter C."/>
            <person name="Tapia R."/>
            <person name="Han S."/>
            <person name="Saunders E."/>
            <person name="Goodwin L.A."/>
            <person name="Han J."/>
            <person name="Woyke T."/>
            <person name="Pitluck S."/>
            <person name="Pennacchio L."/>
            <person name="Nolan M."/>
            <person name="Mikhailova N."/>
            <person name="Lykidis A."/>
            <person name="Land M.L."/>
            <person name="Brettin T."/>
            <person name="Stetter K.O."/>
            <person name="Nelson K.E."/>
            <person name="Gogarten J.P."/>
            <person name="Noll K.M."/>
        </authorList>
    </citation>
    <scope>NUCLEOTIDE SEQUENCE [LARGE SCALE GENOMIC DNA]</scope>
    <source>
        <strain>RQ2</strain>
    </source>
</reference>
<feature type="chain" id="PRO_1000098454" description="Methionyl-tRNA formyltransferase">
    <location>
        <begin position="1"/>
        <end position="313"/>
    </location>
</feature>
<feature type="binding site" evidence="1">
    <location>
        <begin position="109"/>
        <end position="112"/>
    </location>
    <ligand>
        <name>(6S)-5,6,7,8-tetrahydrofolate</name>
        <dbReference type="ChEBI" id="CHEBI:57453"/>
    </ligand>
</feature>